<name>RNP2_METVS</name>
<evidence type="ECO:0000255" key="1">
    <source>
        <dbReference type="HAMAP-Rule" id="MF_00755"/>
    </source>
</evidence>
<sequence>MLKTLPPTLREKKRYVAFEIISESEFPQKEVVGIIRSAVLIYCGIHGCSKVNPWLIDYRHPSGILRVSREYLDLLRSSLMLFDEYKRNPINIRIIGVSNSVKHIREKFLHVSHEPYYKVIQKLKKRNLVK</sequence>
<feature type="chain" id="PRO_1000046624" description="Ribonuclease P protein component 2">
    <location>
        <begin position="1"/>
        <end position="130"/>
    </location>
</feature>
<gene>
    <name evidence="1" type="primary">rnp2</name>
    <name type="ordered locus">Mevan_0042</name>
</gene>
<dbReference type="EC" id="3.1.26.5" evidence="1"/>
<dbReference type="EMBL" id="CP000742">
    <property type="protein sequence ID" value="ABR53957.1"/>
    <property type="molecule type" value="Genomic_DNA"/>
</dbReference>
<dbReference type="RefSeq" id="WP_011971861.1">
    <property type="nucleotide sequence ID" value="NC_009634.1"/>
</dbReference>
<dbReference type="SMR" id="A6UN85"/>
<dbReference type="STRING" id="406327.Mevan_0042"/>
<dbReference type="GeneID" id="5325592"/>
<dbReference type="KEGG" id="mvn:Mevan_0042"/>
<dbReference type="eggNOG" id="arCOG01365">
    <property type="taxonomic scope" value="Archaea"/>
</dbReference>
<dbReference type="HOGENOM" id="CLU_137733_1_0_2"/>
<dbReference type="OrthoDB" id="19261at2157"/>
<dbReference type="Proteomes" id="UP000001107">
    <property type="component" value="Chromosome"/>
</dbReference>
<dbReference type="GO" id="GO:0005737">
    <property type="term" value="C:cytoplasm"/>
    <property type="evidence" value="ECO:0007669"/>
    <property type="project" value="UniProtKB-SubCell"/>
</dbReference>
<dbReference type="GO" id="GO:0030677">
    <property type="term" value="C:ribonuclease P complex"/>
    <property type="evidence" value="ECO:0007669"/>
    <property type="project" value="UniProtKB-UniRule"/>
</dbReference>
<dbReference type="GO" id="GO:0004526">
    <property type="term" value="F:ribonuclease P activity"/>
    <property type="evidence" value="ECO:0007669"/>
    <property type="project" value="UniProtKB-UniRule"/>
</dbReference>
<dbReference type="GO" id="GO:0001682">
    <property type="term" value="P:tRNA 5'-leader removal"/>
    <property type="evidence" value="ECO:0007669"/>
    <property type="project" value="UniProtKB-UniRule"/>
</dbReference>
<dbReference type="Gene3D" id="3.30.70.3250">
    <property type="entry name" value="Ribonuclease P, Pop5 subunit"/>
    <property type="match status" value="1"/>
</dbReference>
<dbReference type="HAMAP" id="MF_00755">
    <property type="entry name" value="RNase_P_2"/>
    <property type="match status" value="1"/>
</dbReference>
<dbReference type="InterPro" id="IPR002759">
    <property type="entry name" value="Pop5/Rpp14/Rnp2-like"/>
</dbReference>
<dbReference type="InterPro" id="IPR038085">
    <property type="entry name" value="Rnp2-like_sf"/>
</dbReference>
<dbReference type="InterPro" id="IPR016434">
    <property type="entry name" value="Rnp2_archaea"/>
</dbReference>
<dbReference type="PANTHER" id="PTHR15441">
    <property type="entry name" value="RIBONUCLEASE P PROTEIN SUBUNIT P14"/>
    <property type="match status" value="1"/>
</dbReference>
<dbReference type="PANTHER" id="PTHR15441:SF2">
    <property type="entry name" value="RIBONUCLEASE P_MRP PROTEIN SUBUNIT POP5"/>
    <property type="match status" value="1"/>
</dbReference>
<dbReference type="Pfam" id="PF01900">
    <property type="entry name" value="RNase_P_Rpp14"/>
    <property type="match status" value="1"/>
</dbReference>
<dbReference type="PIRSF" id="PIRSF004952">
    <property type="entry name" value="RNase_P_2"/>
    <property type="match status" value="1"/>
</dbReference>
<dbReference type="SUPFAM" id="SSF160350">
    <property type="entry name" value="Rnp2-like"/>
    <property type="match status" value="1"/>
</dbReference>
<proteinExistence type="inferred from homology"/>
<keyword id="KW-0963">Cytoplasm</keyword>
<keyword id="KW-0255">Endonuclease</keyword>
<keyword id="KW-0378">Hydrolase</keyword>
<keyword id="KW-0540">Nuclease</keyword>
<keyword id="KW-0819">tRNA processing</keyword>
<accession>A6UN85</accession>
<organism>
    <name type="scientific">Methanococcus vannielii (strain ATCC 35089 / DSM 1224 / JCM 13029 / OCM 148 / SB)</name>
    <dbReference type="NCBI Taxonomy" id="406327"/>
    <lineage>
        <taxon>Archaea</taxon>
        <taxon>Methanobacteriati</taxon>
        <taxon>Methanobacteriota</taxon>
        <taxon>Methanomada group</taxon>
        <taxon>Methanococci</taxon>
        <taxon>Methanococcales</taxon>
        <taxon>Methanococcaceae</taxon>
        <taxon>Methanococcus</taxon>
    </lineage>
</organism>
<reference key="1">
    <citation type="submission" date="2007-06" db="EMBL/GenBank/DDBJ databases">
        <title>Complete sequence of Methanococcus vannielii SB.</title>
        <authorList>
            <consortium name="US DOE Joint Genome Institute"/>
            <person name="Copeland A."/>
            <person name="Lucas S."/>
            <person name="Lapidus A."/>
            <person name="Barry K."/>
            <person name="Glavina del Rio T."/>
            <person name="Dalin E."/>
            <person name="Tice H."/>
            <person name="Pitluck S."/>
            <person name="Chain P."/>
            <person name="Malfatti S."/>
            <person name="Shin M."/>
            <person name="Vergez L."/>
            <person name="Schmutz J."/>
            <person name="Larimer F."/>
            <person name="Land M."/>
            <person name="Hauser L."/>
            <person name="Kyrpides N."/>
            <person name="Anderson I."/>
            <person name="Sieprawska-Lupa M."/>
            <person name="Whitman W.B."/>
            <person name="Richardson P."/>
        </authorList>
    </citation>
    <scope>NUCLEOTIDE SEQUENCE [LARGE SCALE GENOMIC DNA]</scope>
    <source>
        <strain>ATCC 35089 / DSM 1224 / JCM 13029 / OCM 148 / SB</strain>
    </source>
</reference>
<comment type="function">
    <text evidence="1">Part of ribonuclease P, a protein complex that generates mature tRNA molecules by cleaving their 5'-ends.</text>
</comment>
<comment type="catalytic activity">
    <reaction evidence="1">
        <text>Endonucleolytic cleavage of RNA, removing 5'-extranucleotides from tRNA precursor.</text>
        <dbReference type="EC" id="3.1.26.5"/>
    </reaction>
</comment>
<comment type="subunit">
    <text evidence="1">Consists of a catalytic RNA component and at least 4-5 protein subunits.</text>
</comment>
<comment type="subcellular location">
    <subcellularLocation>
        <location evidence="1">Cytoplasm</location>
    </subcellularLocation>
</comment>
<comment type="similarity">
    <text evidence="1">Belongs to the eukaryotic/archaeal RNase P protein component 2 family.</text>
</comment>
<protein>
    <recommendedName>
        <fullName evidence="1">Ribonuclease P protein component 2</fullName>
        <shortName evidence="1">RNase P component 2</shortName>
        <ecNumber evidence="1">3.1.26.5</ecNumber>
    </recommendedName>
    <alternativeName>
        <fullName evidence="1">Pop5</fullName>
    </alternativeName>
</protein>